<keyword id="KW-0963">Cytoplasm</keyword>
<keyword id="KW-0255">Endonuclease</keyword>
<keyword id="KW-0378">Hydrolase</keyword>
<keyword id="KW-0464">Manganese</keyword>
<keyword id="KW-0479">Metal-binding</keyword>
<keyword id="KW-0540">Nuclease</keyword>
<keyword id="KW-1185">Reference proteome</keyword>
<feature type="chain" id="PRO_0000334937" description="Ribonuclease HII">
    <location>
        <begin position="1"/>
        <end position="196"/>
    </location>
</feature>
<feature type="domain" description="RNase H type-2" evidence="2">
    <location>
        <begin position="4"/>
        <end position="196"/>
    </location>
</feature>
<feature type="binding site" evidence="1">
    <location>
        <position position="10"/>
    </location>
    <ligand>
        <name>a divalent metal cation</name>
        <dbReference type="ChEBI" id="CHEBI:60240"/>
    </ligand>
</feature>
<feature type="binding site" evidence="1">
    <location>
        <position position="11"/>
    </location>
    <ligand>
        <name>a divalent metal cation</name>
        <dbReference type="ChEBI" id="CHEBI:60240"/>
    </ligand>
</feature>
<feature type="binding site" evidence="1">
    <location>
        <position position="106"/>
    </location>
    <ligand>
        <name>a divalent metal cation</name>
        <dbReference type="ChEBI" id="CHEBI:60240"/>
    </ligand>
</feature>
<protein>
    <recommendedName>
        <fullName evidence="1">Ribonuclease HII</fullName>
        <shortName evidence="1">RNase HII</shortName>
        <ecNumber evidence="1">3.1.26.4</ecNumber>
    </recommendedName>
</protein>
<organism>
    <name type="scientific">Polynucleobacter asymbioticus (strain DSM 18221 / CIP 109841 / QLW-P1DMWA-1)</name>
    <name type="common">Polynucleobacter necessarius subsp. asymbioticus</name>
    <dbReference type="NCBI Taxonomy" id="312153"/>
    <lineage>
        <taxon>Bacteria</taxon>
        <taxon>Pseudomonadati</taxon>
        <taxon>Pseudomonadota</taxon>
        <taxon>Betaproteobacteria</taxon>
        <taxon>Burkholderiales</taxon>
        <taxon>Burkholderiaceae</taxon>
        <taxon>Polynucleobacter</taxon>
    </lineage>
</organism>
<sequence length="196" mass="21400">MNMIWVCGVDEAGRGPLVGAVVAGAVVLDPENPIEGLKDSKKLSAVRREFLYEQIMEKAKAWGVGEASPTEIDSINILQATMLAMRRAVEDLAARLGEWPSKALIDGNRCPELSIAAEAIVKGDTKEPAISAASIVAKVTRDRQMIALHEQHPQYGFSQHMGYPTEAHFAALKQYGVCTEHRKSFAPVRRVLEGSF</sequence>
<reference key="1">
    <citation type="journal article" date="2012" name="Stand. Genomic Sci.">
        <title>Complete genome sequence of Polynucleobacter necessarius subsp. asymbioticus type strain (QLW-P1DMWA-1(T)).</title>
        <authorList>
            <person name="Meincke L."/>
            <person name="Copeland A."/>
            <person name="Lapidus A."/>
            <person name="Lucas S."/>
            <person name="Berry K.W."/>
            <person name="Del Rio T.G."/>
            <person name="Hammon N."/>
            <person name="Dalin E."/>
            <person name="Tice H."/>
            <person name="Pitluck S."/>
            <person name="Richardson P."/>
            <person name="Bruce D."/>
            <person name="Goodwin L."/>
            <person name="Han C."/>
            <person name="Tapia R."/>
            <person name="Detter J.C."/>
            <person name="Schmutz J."/>
            <person name="Brettin T."/>
            <person name="Larimer F."/>
            <person name="Land M."/>
            <person name="Hauser L."/>
            <person name="Kyrpides N.C."/>
            <person name="Ivanova N."/>
            <person name="Goker M."/>
            <person name="Woyke T."/>
            <person name="Wu Q.L."/>
            <person name="Pockl M."/>
            <person name="Hahn M.W."/>
            <person name="Klenk H.P."/>
        </authorList>
    </citation>
    <scope>NUCLEOTIDE SEQUENCE [LARGE SCALE GENOMIC DNA]</scope>
    <source>
        <strain>DSM 18221 / CIP 109841 / QLW-P1DMWA-1</strain>
    </source>
</reference>
<evidence type="ECO:0000255" key="1">
    <source>
        <dbReference type="HAMAP-Rule" id="MF_00052"/>
    </source>
</evidence>
<evidence type="ECO:0000255" key="2">
    <source>
        <dbReference type="PROSITE-ProRule" id="PRU01319"/>
    </source>
</evidence>
<accession>A4SYT7</accession>
<proteinExistence type="inferred from homology"/>
<comment type="function">
    <text evidence="1">Endonuclease that specifically degrades the RNA of RNA-DNA hybrids.</text>
</comment>
<comment type="catalytic activity">
    <reaction evidence="1">
        <text>Endonucleolytic cleavage to 5'-phosphomonoester.</text>
        <dbReference type="EC" id="3.1.26.4"/>
    </reaction>
</comment>
<comment type="cofactor">
    <cofactor evidence="1">
        <name>Mn(2+)</name>
        <dbReference type="ChEBI" id="CHEBI:29035"/>
    </cofactor>
    <cofactor evidence="1">
        <name>Mg(2+)</name>
        <dbReference type="ChEBI" id="CHEBI:18420"/>
    </cofactor>
    <text evidence="1">Manganese or magnesium. Binds 1 divalent metal ion per monomer in the absence of substrate. May bind a second metal ion after substrate binding.</text>
</comment>
<comment type="subcellular location">
    <subcellularLocation>
        <location evidence="1">Cytoplasm</location>
    </subcellularLocation>
</comment>
<comment type="similarity">
    <text evidence="1">Belongs to the RNase HII family.</text>
</comment>
<dbReference type="EC" id="3.1.26.4" evidence="1"/>
<dbReference type="EMBL" id="CP000655">
    <property type="protein sequence ID" value="ABP34651.1"/>
    <property type="molecule type" value="Genomic_DNA"/>
</dbReference>
<dbReference type="RefSeq" id="WP_011903274.1">
    <property type="nucleotide sequence ID" value="NC_009379.1"/>
</dbReference>
<dbReference type="SMR" id="A4SYT7"/>
<dbReference type="GeneID" id="31481827"/>
<dbReference type="KEGG" id="pnu:Pnuc_1437"/>
<dbReference type="eggNOG" id="COG0164">
    <property type="taxonomic scope" value="Bacteria"/>
</dbReference>
<dbReference type="HOGENOM" id="CLU_036532_3_2_4"/>
<dbReference type="Proteomes" id="UP000000231">
    <property type="component" value="Chromosome"/>
</dbReference>
<dbReference type="GO" id="GO:0005737">
    <property type="term" value="C:cytoplasm"/>
    <property type="evidence" value="ECO:0007669"/>
    <property type="project" value="UniProtKB-SubCell"/>
</dbReference>
<dbReference type="GO" id="GO:0032299">
    <property type="term" value="C:ribonuclease H2 complex"/>
    <property type="evidence" value="ECO:0007669"/>
    <property type="project" value="TreeGrafter"/>
</dbReference>
<dbReference type="GO" id="GO:0030145">
    <property type="term" value="F:manganese ion binding"/>
    <property type="evidence" value="ECO:0007669"/>
    <property type="project" value="UniProtKB-UniRule"/>
</dbReference>
<dbReference type="GO" id="GO:0003723">
    <property type="term" value="F:RNA binding"/>
    <property type="evidence" value="ECO:0007669"/>
    <property type="project" value="InterPro"/>
</dbReference>
<dbReference type="GO" id="GO:0004523">
    <property type="term" value="F:RNA-DNA hybrid ribonuclease activity"/>
    <property type="evidence" value="ECO:0007669"/>
    <property type="project" value="UniProtKB-UniRule"/>
</dbReference>
<dbReference type="GO" id="GO:0043137">
    <property type="term" value="P:DNA replication, removal of RNA primer"/>
    <property type="evidence" value="ECO:0007669"/>
    <property type="project" value="TreeGrafter"/>
</dbReference>
<dbReference type="GO" id="GO:0006298">
    <property type="term" value="P:mismatch repair"/>
    <property type="evidence" value="ECO:0007669"/>
    <property type="project" value="TreeGrafter"/>
</dbReference>
<dbReference type="CDD" id="cd07182">
    <property type="entry name" value="RNase_HII_bacteria_HII_like"/>
    <property type="match status" value="1"/>
</dbReference>
<dbReference type="FunFam" id="3.30.420.10:FF:000006">
    <property type="entry name" value="Ribonuclease HII"/>
    <property type="match status" value="1"/>
</dbReference>
<dbReference type="Gene3D" id="3.30.420.10">
    <property type="entry name" value="Ribonuclease H-like superfamily/Ribonuclease H"/>
    <property type="match status" value="1"/>
</dbReference>
<dbReference type="HAMAP" id="MF_00052_B">
    <property type="entry name" value="RNase_HII_B"/>
    <property type="match status" value="1"/>
</dbReference>
<dbReference type="InterPro" id="IPR022898">
    <property type="entry name" value="RNase_HII"/>
</dbReference>
<dbReference type="InterPro" id="IPR001352">
    <property type="entry name" value="RNase_HII/HIII"/>
</dbReference>
<dbReference type="InterPro" id="IPR024567">
    <property type="entry name" value="RNase_HII/HIII_dom"/>
</dbReference>
<dbReference type="InterPro" id="IPR012337">
    <property type="entry name" value="RNaseH-like_sf"/>
</dbReference>
<dbReference type="InterPro" id="IPR036397">
    <property type="entry name" value="RNaseH_sf"/>
</dbReference>
<dbReference type="NCBIfam" id="NF000595">
    <property type="entry name" value="PRK00015.1-3"/>
    <property type="match status" value="1"/>
</dbReference>
<dbReference type="NCBIfam" id="NF000596">
    <property type="entry name" value="PRK00015.1-4"/>
    <property type="match status" value="1"/>
</dbReference>
<dbReference type="PANTHER" id="PTHR10954">
    <property type="entry name" value="RIBONUCLEASE H2 SUBUNIT A"/>
    <property type="match status" value="1"/>
</dbReference>
<dbReference type="PANTHER" id="PTHR10954:SF18">
    <property type="entry name" value="RIBONUCLEASE HII"/>
    <property type="match status" value="1"/>
</dbReference>
<dbReference type="Pfam" id="PF01351">
    <property type="entry name" value="RNase_HII"/>
    <property type="match status" value="1"/>
</dbReference>
<dbReference type="SUPFAM" id="SSF53098">
    <property type="entry name" value="Ribonuclease H-like"/>
    <property type="match status" value="1"/>
</dbReference>
<dbReference type="PROSITE" id="PS51975">
    <property type="entry name" value="RNASE_H_2"/>
    <property type="match status" value="1"/>
</dbReference>
<gene>
    <name evidence="1" type="primary">rnhB</name>
    <name type="ordered locus">Pnuc_1437</name>
</gene>
<name>RNH2_POLAQ</name>